<proteinExistence type="inferred from homology"/>
<evidence type="ECO:0000255" key="1">
    <source>
        <dbReference type="HAMAP-Rule" id="MF_03029"/>
    </source>
</evidence>
<organism>
    <name type="scientific">Drosophila simulans</name>
    <name type="common">Fruit fly</name>
    <dbReference type="NCBI Taxonomy" id="7240"/>
    <lineage>
        <taxon>Eukaryota</taxon>
        <taxon>Metazoa</taxon>
        <taxon>Ecdysozoa</taxon>
        <taxon>Arthropoda</taxon>
        <taxon>Hexapoda</taxon>
        <taxon>Insecta</taxon>
        <taxon>Pterygota</taxon>
        <taxon>Neoptera</taxon>
        <taxon>Endopterygota</taxon>
        <taxon>Diptera</taxon>
        <taxon>Brachycera</taxon>
        <taxon>Muscomorpha</taxon>
        <taxon>Ephydroidea</taxon>
        <taxon>Drosophilidae</taxon>
        <taxon>Drosophila</taxon>
        <taxon>Sophophora</taxon>
    </lineage>
</organism>
<comment type="function">
    <text evidence="1">Required for maturation of ribosomal RNAs and formation of the large ribosomal subunit.</text>
</comment>
<comment type="subcellular location">
    <subcellularLocation>
        <location evidence="1">Nucleus</location>
        <location evidence="1">Nucleolus</location>
    </subcellularLocation>
    <subcellularLocation>
        <location evidence="1">Nucleus</location>
        <location evidence="1">Nucleoplasm</location>
    </subcellularLocation>
</comment>
<comment type="similarity">
    <text evidence="1">Belongs to the WD repeat WDR12/YTM1 family.</text>
</comment>
<protein>
    <recommendedName>
        <fullName evidence="1">Ribosome biogenesis protein WDR12 homolog</fullName>
    </recommendedName>
</protein>
<gene>
    <name type="ORF">GD22226</name>
</gene>
<sequence length="420" mass="47192">MDVDNGEGQVQVHLKTKQEHYAVPDVPYAIDGTVTTVELNTFVNALLRQKDGSSDTEFDFLVFDEYLRGRLCDHLREKAISFEDAIEIEYVERFPAPEPQDCLLHDDWVSAVKARGKWILSGCYDNSLNLWTNKGKHILTISGHTAPIKAVDWISLDEETGRFVSTSQDQTAMLWKWNVGSNAVDCVSVCKGHERGVDSVSVSPDGLRFATGSWDTMLKVWSAELDDGVEGSSKRMKESGVRTPKITLQGHRESVSAVQWMDATTLLTGSWDYTLKVWDLSLEGIKTEISTNKSIFDASYSKLNRLILTASADKNLRLYDPRTNQGSVVRNTYLGHNAWVQTVMWSTTEEFLFVSGAYDNQNKLWDCRSPKAPLYDLLGHGDKVLDIDWSNPKYIVSGGVDNSVRVFKSRKALAEDTETK</sequence>
<name>WDR12_DROSI</name>
<reference key="1">
    <citation type="journal article" date="2007" name="Nature">
        <title>Evolution of genes and genomes on the Drosophila phylogeny.</title>
        <authorList>
            <consortium name="Drosophila 12 genomes consortium"/>
        </authorList>
    </citation>
    <scope>NUCLEOTIDE SEQUENCE [LARGE SCALE GENOMIC DNA]</scope>
</reference>
<accession>B4Q9T6</accession>
<feature type="chain" id="PRO_0000369563" description="Ribosome biogenesis protein WDR12 homolog">
    <location>
        <begin position="1"/>
        <end position="420"/>
    </location>
</feature>
<feature type="repeat" description="WD 1">
    <location>
        <begin position="104"/>
        <end position="142"/>
    </location>
</feature>
<feature type="repeat" description="WD 2">
    <location>
        <begin position="143"/>
        <end position="185"/>
    </location>
</feature>
<feature type="repeat" description="WD 3">
    <location>
        <begin position="192"/>
        <end position="231"/>
    </location>
</feature>
<feature type="repeat" description="WD 4">
    <location>
        <begin position="250"/>
        <end position="288"/>
    </location>
</feature>
<feature type="repeat" description="WD 5">
    <location>
        <begin position="290"/>
        <end position="329"/>
    </location>
</feature>
<feature type="repeat" description="WD 6">
    <location>
        <begin position="335"/>
        <end position="375"/>
    </location>
</feature>
<feature type="repeat" description="WD 7">
    <location>
        <begin position="379"/>
        <end position="417"/>
    </location>
</feature>
<feature type="region of interest" description="Ubiquitin-like (UBL) domain" evidence="1">
    <location>
        <begin position="10"/>
        <end position="92"/>
    </location>
</feature>
<keyword id="KW-0539">Nucleus</keyword>
<keyword id="KW-1185">Reference proteome</keyword>
<keyword id="KW-0677">Repeat</keyword>
<keyword id="KW-0690">Ribosome biogenesis</keyword>
<keyword id="KW-0698">rRNA processing</keyword>
<keyword id="KW-0853">WD repeat</keyword>
<dbReference type="EMBL" id="CM000361">
    <property type="protein sequence ID" value="EDX04603.1"/>
    <property type="molecule type" value="Genomic_DNA"/>
</dbReference>
<dbReference type="SMR" id="B4Q9T6"/>
<dbReference type="STRING" id="7240.B4Q9T6"/>
<dbReference type="EnsemblMetazoa" id="FBtr0222136">
    <property type="protein sequence ID" value="FBpp0220628"/>
    <property type="gene ID" value="FBgn0193635"/>
</dbReference>
<dbReference type="EnsemblMetazoa" id="XM_002078982.4">
    <property type="protein sequence ID" value="XP_002079018.1"/>
    <property type="gene ID" value="LOC6731883"/>
</dbReference>
<dbReference type="GeneID" id="6731883"/>
<dbReference type="HOGENOM" id="CLU_000288_57_0_1"/>
<dbReference type="OMA" id="DHKYVEF"/>
<dbReference type="OrthoDB" id="10251381at2759"/>
<dbReference type="PhylomeDB" id="B4Q9T6"/>
<dbReference type="Proteomes" id="UP000000304">
    <property type="component" value="Chromosome 2L"/>
</dbReference>
<dbReference type="Bgee" id="FBgn0193635">
    <property type="expression patterns" value="Expressed in embryo and 3 other cell types or tissues"/>
</dbReference>
<dbReference type="GO" id="GO:0005654">
    <property type="term" value="C:nucleoplasm"/>
    <property type="evidence" value="ECO:0007669"/>
    <property type="project" value="UniProtKB-SubCell"/>
</dbReference>
<dbReference type="GO" id="GO:0070545">
    <property type="term" value="C:PeBoW complex"/>
    <property type="evidence" value="ECO:0000250"/>
    <property type="project" value="UniProtKB"/>
</dbReference>
<dbReference type="GO" id="GO:0030687">
    <property type="term" value="C:preribosome, large subunit precursor"/>
    <property type="evidence" value="ECO:0007669"/>
    <property type="project" value="UniProtKB-UniRule"/>
</dbReference>
<dbReference type="GO" id="GO:0043021">
    <property type="term" value="F:ribonucleoprotein complex binding"/>
    <property type="evidence" value="ECO:0007669"/>
    <property type="project" value="UniProtKB-UniRule"/>
</dbReference>
<dbReference type="GO" id="GO:0000466">
    <property type="term" value="P:maturation of 5.8S rRNA from tricistronic rRNA transcript (SSU-rRNA, 5.8S rRNA, LSU-rRNA)"/>
    <property type="evidence" value="ECO:0007669"/>
    <property type="project" value="UniProtKB-UniRule"/>
</dbReference>
<dbReference type="GO" id="GO:0000463">
    <property type="term" value="P:maturation of LSU-rRNA from tricistronic rRNA transcript (SSU-rRNA, 5.8S rRNA, LSU-rRNA)"/>
    <property type="evidence" value="ECO:0000250"/>
    <property type="project" value="UniProtKB"/>
</dbReference>
<dbReference type="CDD" id="cd00200">
    <property type="entry name" value="WD40"/>
    <property type="match status" value="1"/>
</dbReference>
<dbReference type="FunFam" id="2.130.10.10:FF:000878">
    <property type="entry name" value="Ribosome biogenesis protein WDR12 homolog"/>
    <property type="match status" value="1"/>
</dbReference>
<dbReference type="FunFam" id="2.130.10.10:FF:000989">
    <property type="entry name" value="Ribosome biogenesis protein WDR12 homolog"/>
    <property type="match status" value="1"/>
</dbReference>
<dbReference type="FunFam" id="2.130.10.10:FF:001205">
    <property type="entry name" value="Ribosome biogenesis protein WDR12 homolog"/>
    <property type="match status" value="1"/>
</dbReference>
<dbReference type="Gene3D" id="2.130.10.10">
    <property type="entry name" value="YVTN repeat-like/Quinoprotein amine dehydrogenase"/>
    <property type="match status" value="3"/>
</dbReference>
<dbReference type="HAMAP" id="MF_03029">
    <property type="entry name" value="WDR12"/>
    <property type="match status" value="1"/>
</dbReference>
<dbReference type="InterPro" id="IPR020472">
    <property type="entry name" value="G-protein_beta_WD-40_rep"/>
</dbReference>
<dbReference type="InterPro" id="IPR012972">
    <property type="entry name" value="NLE"/>
</dbReference>
<dbReference type="InterPro" id="IPR015943">
    <property type="entry name" value="WD40/YVTN_repeat-like_dom_sf"/>
</dbReference>
<dbReference type="InterPro" id="IPR019775">
    <property type="entry name" value="WD40_repeat_CS"/>
</dbReference>
<dbReference type="InterPro" id="IPR036322">
    <property type="entry name" value="WD40_repeat_dom_sf"/>
</dbReference>
<dbReference type="InterPro" id="IPR001680">
    <property type="entry name" value="WD40_rpt"/>
</dbReference>
<dbReference type="InterPro" id="IPR028599">
    <property type="entry name" value="WDR12/Ytm1"/>
</dbReference>
<dbReference type="PANTHER" id="PTHR19855:SF11">
    <property type="entry name" value="RIBOSOME BIOGENESIS PROTEIN WDR12"/>
    <property type="match status" value="1"/>
</dbReference>
<dbReference type="PANTHER" id="PTHR19855">
    <property type="entry name" value="WD40 REPEAT PROTEIN 12, 37"/>
    <property type="match status" value="1"/>
</dbReference>
<dbReference type="Pfam" id="PF08154">
    <property type="entry name" value="NLE"/>
    <property type="match status" value="1"/>
</dbReference>
<dbReference type="Pfam" id="PF00400">
    <property type="entry name" value="WD40"/>
    <property type="match status" value="7"/>
</dbReference>
<dbReference type="PRINTS" id="PR00320">
    <property type="entry name" value="GPROTEINBRPT"/>
</dbReference>
<dbReference type="SMART" id="SM00320">
    <property type="entry name" value="WD40"/>
    <property type="match status" value="7"/>
</dbReference>
<dbReference type="SUPFAM" id="SSF50978">
    <property type="entry name" value="WD40 repeat-like"/>
    <property type="match status" value="1"/>
</dbReference>
<dbReference type="PROSITE" id="PS00678">
    <property type="entry name" value="WD_REPEATS_1"/>
    <property type="match status" value="1"/>
</dbReference>
<dbReference type="PROSITE" id="PS50082">
    <property type="entry name" value="WD_REPEATS_2"/>
    <property type="match status" value="4"/>
</dbReference>
<dbReference type="PROSITE" id="PS50294">
    <property type="entry name" value="WD_REPEATS_REGION"/>
    <property type="match status" value="1"/>
</dbReference>